<name>KYNU_CANAL</name>
<reference key="1">
    <citation type="journal article" date="2004" name="Proc. Natl. Acad. Sci. U.S.A.">
        <title>The diploid genome sequence of Candida albicans.</title>
        <authorList>
            <person name="Jones T."/>
            <person name="Federspiel N.A."/>
            <person name="Chibana H."/>
            <person name="Dungan J."/>
            <person name="Kalman S."/>
            <person name="Magee B.B."/>
            <person name="Newport G."/>
            <person name="Thorstenson Y.R."/>
            <person name="Agabian N."/>
            <person name="Magee P.T."/>
            <person name="Davis R.W."/>
            <person name="Scherer S."/>
        </authorList>
    </citation>
    <scope>NUCLEOTIDE SEQUENCE [LARGE SCALE GENOMIC DNA]</scope>
    <source>
        <strain>SC5314 / ATCC MYA-2876</strain>
    </source>
</reference>
<reference key="2">
    <citation type="journal article" date="2007" name="Genome Biol.">
        <title>Assembly of the Candida albicans genome into sixteen supercontigs aligned on the eight chromosomes.</title>
        <authorList>
            <person name="van het Hoog M."/>
            <person name="Rast T.J."/>
            <person name="Martchenko M."/>
            <person name="Grindle S."/>
            <person name="Dignard D."/>
            <person name="Hogues H."/>
            <person name="Cuomo C."/>
            <person name="Berriman M."/>
            <person name="Scherer S."/>
            <person name="Magee B.B."/>
            <person name="Whiteway M."/>
            <person name="Chibana H."/>
            <person name="Nantel A."/>
            <person name="Magee P.T."/>
        </authorList>
    </citation>
    <scope>GENOME REANNOTATION</scope>
    <source>
        <strain>SC5314 / ATCC MYA-2876</strain>
    </source>
</reference>
<reference key="3">
    <citation type="journal article" date="2013" name="Genome Biol.">
        <title>Assembly of a phased diploid Candida albicans genome facilitates allele-specific measurements and provides a simple model for repeat and indel structure.</title>
        <authorList>
            <person name="Muzzey D."/>
            <person name="Schwartz K."/>
            <person name="Weissman J.S."/>
            <person name="Sherlock G."/>
        </authorList>
    </citation>
    <scope>NUCLEOTIDE SEQUENCE [LARGE SCALE GENOMIC DNA]</scope>
    <scope>GENOME REANNOTATION</scope>
    <source>
        <strain>SC5314 / ATCC MYA-2876</strain>
    </source>
</reference>
<sequence length="461" mass="52384">MSLAEAKKLDKKFPTFKNEFAIPTFGSLGIKNNKYESSTESIYLCGNSLGLMPKNTKKAINDELNAWVERGVESHFNHPDKSLTPWVDIDLPLLPLIAPIVGAKENEVAVMGSLTANLNALLIHFYKPEGKRTKILFEKQAFPSDYYAFLNIVKLFGYDEKHLIQLEVQPGETYIKTERIIKAIDENSDELALVCFPGIQYYTGQFFKIEEITKYAKEKSQQIKVGWDLAHAVGNVPLNLHDWGVDFAAWCSYKYLNSGPGAIGGIFVHEKYTIENKKSSFVPRLAGWWGNNSQERFKMLEEFDPINSALSYRQSNPSVLDVVAVKSSLEVYAKVGGVSKLREKSVALTQFLQDLLTNSKYYIPQSSTSNSKFGFKILTPLNPAERGCQLSIMFQPHFDEKDKNVMERVNAYLHDHAIICDERRPDVIRLAPLPLYNTFEETFIAVQRLFEALDNISKEYM</sequence>
<keyword id="KW-0963">Cytoplasm</keyword>
<keyword id="KW-0378">Hydrolase</keyword>
<keyword id="KW-0662">Pyridine nucleotide biosynthesis</keyword>
<keyword id="KW-0663">Pyridoxal phosphate</keyword>
<keyword id="KW-1185">Reference proteome</keyword>
<evidence type="ECO:0000255" key="1">
    <source>
        <dbReference type="HAMAP-Rule" id="MF_03017"/>
    </source>
</evidence>
<accession>Q59QC4</accession>
<accession>A0A1D8PEC0</accession>
<feature type="chain" id="PRO_0000356973" description="Kynureninase">
    <location>
        <begin position="1"/>
        <end position="461"/>
    </location>
</feature>
<feature type="binding site" evidence="1">
    <location>
        <position position="114"/>
    </location>
    <ligand>
        <name>pyridoxal 5'-phosphate</name>
        <dbReference type="ChEBI" id="CHEBI:597326"/>
    </ligand>
</feature>
<feature type="binding site" evidence="1">
    <location>
        <position position="115"/>
    </location>
    <ligand>
        <name>pyridoxal 5'-phosphate</name>
        <dbReference type="ChEBI" id="CHEBI:597326"/>
    </ligand>
</feature>
<feature type="binding site" evidence="1">
    <location>
        <begin position="142"/>
        <end position="145"/>
    </location>
    <ligand>
        <name>pyridoxal 5'-phosphate</name>
        <dbReference type="ChEBI" id="CHEBI:597326"/>
    </ligand>
</feature>
<feature type="binding site" evidence="1">
    <location>
        <position position="228"/>
    </location>
    <ligand>
        <name>pyridoxal 5'-phosphate</name>
        <dbReference type="ChEBI" id="CHEBI:597326"/>
    </ligand>
</feature>
<feature type="binding site" evidence="1">
    <location>
        <position position="231"/>
    </location>
    <ligand>
        <name>pyridoxal 5'-phosphate</name>
        <dbReference type="ChEBI" id="CHEBI:597326"/>
    </ligand>
</feature>
<feature type="binding site" evidence="1">
    <location>
        <position position="253"/>
    </location>
    <ligand>
        <name>pyridoxal 5'-phosphate</name>
        <dbReference type="ChEBI" id="CHEBI:597326"/>
    </ligand>
</feature>
<feature type="binding site" evidence="1">
    <location>
        <position position="288"/>
    </location>
    <ligand>
        <name>pyridoxal 5'-phosphate</name>
        <dbReference type="ChEBI" id="CHEBI:597326"/>
    </ligand>
</feature>
<feature type="binding site" evidence="1">
    <location>
        <position position="316"/>
    </location>
    <ligand>
        <name>pyridoxal 5'-phosphate</name>
        <dbReference type="ChEBI" id="CHEBI:597326"/>
    </ligand>
</feature>
<feature type="modified residue" description="N6-(pyridoxal phosphate)lysine" evidence="1">
    <location>
        <position position="254"/>
    </location>
</feature>
<gene>
    <name evidence="1" type="primary">BNA5</name>
    <name type="ordered locus">CAALFM_C108490WA</name>
    <name type="ORF">CaO19.394</name>
    <name type="ORF">CaO19.8024</name>
</gene>
<dbReference type="EC" id="3.7.1.3" evidence="1"/>
<dbReference type="EMBL" id="CP017623">
    <property type="protein sequence ID" value="AOW26487.1"/>
    <property type="molecule type" value="Genomic_DNA"/>
</dbReference>
<dbReference type="RefSeq" id="XP_711882.1">
    <property type="nucleotide sequence ID" value="XM_706789.2"/>
</dbReference>
<dbReference type="SMR" id="Q59QC4"/>
<dbReference type="FunCoup" id="Q59QC4">
    <property type="interactions" value="223"/>
</dbReference>
<dbReference type="STRING" id="237561.Q59QC4"/>
<dbReference type="EnsemblFungi" id="C1_08490W_A-T">
    <property type="protein sequence ID" value="C1_08490W_A-T-p1"/>
    <property type="gene ID" value="C1_08490W_A"/>
</dbReference>
<dbReference type="GeneID" id="3646492"/>
<dbReference type="KEGG" id="cal:CAALFM_C108490WA"/>
<dbReference type="CGD" id="CAL0000197943">
    <property type="gene designation" value="orf19.8024"/>
</dbReference>
<dbReference type="VEuPathDB" id="FungiDB:C1_08490W_A"/>
<dbReference type="eggNOG" id="KOG3846">
    <property type="taxonomic scope" value="Eukaryota"/>
</dbReference>
<dbReference type="HOGENOM" id="CLU_003433_4_0_1"/>
<dbReference type="InParanoid" id="Q59QC4"/>
<dbReference type="OMA" id="LPGWNSH"/>
<dbReference type="OrthoDB" id="5978656at2759"/>
<dbReference type="UniPathway" id="UPA00253">
    <property type="reaction ID" value="UER00329"/>
</dbReference>
<dbReference type="UniPathway" id="UPA00334">
    <property type="reaction ID" value="UER00455"/>
</dbReference>
<dbReference type="PRO" id="PR:Q59QC4"/>
<dbReference type="Proteomes" id="UP000000559">
    <property type="component" value="Chromosome 1"/>
</dbReference>
<dbReference type="GO" id="GO:0005737">
    <property type="term" value="C:cytoplasm"/>
    <property type="evidence" value="ECO:0000318"/>
    <property type="project" value="GO_Central"/>
</dbReference>
<dbReference type="GO" id="GO:0030429">
    <property type="term" value="F:kynureninase activity"/>
    <property type="evidence" value="ECO:0000247"/>
    <property type="project" value="CGD"/>
</dbReference>
<dbReference type="GO" id="GO:0030170">
    <property type="term" value="F:pyridoxal phosphate binding"/>
    <property type="evidence" value="ECO:0007669"/>
    <property type="project" value="UniProtKB-UniRule"/>
</dbReference>
<dbReference type="GO" id="GO:0034354">
    <property type="term" value="P:'de novo' NAD biosynthetic process from L-tryptophan"/>
    <property type="evidence" value="ECO:0000247"/>
    <property type="project" value="CGD"/>
</dbReference>
<dbReference type="GO" id="GO:0043420">
    <property type="term" value="P:anthranilate metabolic process"/>
    <property type="evidence" value="ECO:0000318"/>
    <property type="project" value="GO_Central"/>
</dbReference>
<dbReference type="GO" id="GO:0097053">
    <property type="term" value="P:L-kynurenine catabolic process"/>
    <property type="evidence" value="ECO:0007669"/>
    <property type="project" value="UniProtKB-UniRule"/>
</dbReference>
<dbReference type="GO" id="GO:0019441">
    <property type="term" value="P:L-tryptophan catabolic process to kynurenine"/>
    <property type="evidence" value="ECO:0000318"/>
    <property type="project" value="GO_Central"/>
</dbReference>
<dbReference type="GO" id="GO:0019805">
    <property type="term" value="P:quinolinate biosynthetic process"/>
    <property type="evidence" value="ECO:0007669"/>
    <property type="project" value="UniProtKB-UniRule"/>
</dbReference>
<dbReference type="FunFam" id="3.40.640.10:FF:000031">
    <property type="entry name" value="Kynureninase"/>
    <property type="match status" value="1"/>
</dbReference>
<dbReference type="Gene3D" id="3.90.1150.10">
    <property type="entry name" value="Aspartate Aminotransferase, domain 1"/>
    <property type="match status" value="1"/>
</dbReference>
<dbReference type="Gene3D" id="3.40.640.10">
    <property type="entry name" value="Type I PLP-dependent aspartate aminotransferase-like (Major domain)"/>
    <property type="match status" value="1"/>
</dbReference>
<dbReference type="HAMAP" id="MF_01970">
    <property type="entry name" value="Kynureninase"/>
    <property type="match status" value="1"/>
</dbReference>
<dbReference type="InterPro" id="IPR010111">
    <property type="entry name" value="Kynureninase"/>
</dbReference>
<dbReference type="InterPro" id="IPR015424">
    <property type="entry name" value="PyrdxlP-dep_Trfase"/>
</dbReference>
<dbReference type="InterPro" id="IPR015421">
    <property type="entry name" value="PyrdxlP-dep_Trfase_major"/>
</dbReference>
<dbReference type="InterPro" id="IPR015422">
    <property type="entry name" value="PyrdxlP-dep_Trfase_small"/>
</dbReference>
<dbReference type="NCBIfam" id="TIGR01814">
    <property type="entry name" value="kynureninase"/>
    <property type="match status" value="1"/>
</dbReference>
<dbReference type="PANTHER" id="PTHR14084">
    <property type="entry name" value="KYNURENINASE"/>
    <property type="match status" value="1"/>
</dbReference>
<dbReference type="PANTHER" id="PTHR14084:SF0">
    <property type="entry name" value="KYNURENINASE"/>
    <property type="match status" value="1"/>
</dbReference>
<dbReference type="Pfam" id="PF22580">
    <property type="entry name" value="KYNU_C"/>
    <property type="match status" value="1"/>
</dbReference>
<dbReference type="PIRSF" id="PIRSF038800">
    <property type="entry name" value="KYNU"/>
    <property type="match status" value="1"/>
</dbReference>
<dbReference type="SUPFAM" id="SSF53383">
    <property type="entry name" value="PLP-dependent transferases"/>
    <property type="match status" value="1"/>
</dbReference>
<comment type="function">
    <text evidence="1">Catalyzes the cleavage of L-kynurenine (L-Kyn) and L-3-hydroxykynurenine (L-3OHKyn) into anthranilic acid (AA) and 3-hydroxyanthranilic acid (3-OHAA), respectively.</text>
</comment>
<comment type="catalytic activity">
    <reaction evidence="1">
        <text>L-kynurenine + H2O = anthranilate + L-alanine + H(+)</text>
        <dbReference type="Rhea" id="RHEA:16813"/>
        <dbReference type="ChEBI" id="CHEBI:15377"/>
        <dbReference type="ChEBI" id="CHEBI:15378"/>
        <dbReference type="ChEBI" id="CHEBI:16567"/>
        <dbReference type="ChEBI" id="CHEBI:57959"/>
        <dbReference type="ChEBI" id="CHEBI:57972"/>
        <dbReference type="EC" id="3.7.1.3"/>
    </reaction>
</comment>
<comment type="catalytic activity">
    <reaction evidence="1">
        <text>3-hydroxy-L-kynurenine + H2O = 3-hydroxyanthranilate + L-alanine + H(+)</text>
        <dbReference type="Rhea" id="RHEA:25143"/>
        <dbReference type="ChEBI" id="CHEBI:15377"/>
        <dbReference type="ChEBI" id="CHEBI:15378"/>
        <dbReference type="ChEBI" id="CHEBI:36559"/>
        <dbReference type="ChEBI" id="CHEBI:57972"/>
        <dbReference type="ChEBI" id="CHEBI:58125"/>
        <dbReference type="EC" id="3.7.1.3"/>
    </reaction>
</comment>
<comment type="cofactor">
    <cofactor evidence="1">
        <name>pyridoxal 5'-phosphate</name>
        <dbReference type="ChEBI" id="CHEBI:597326"/>
    </cofactor>
</comment>
<comment type="pathway">
    <text evidence="1">Amino-acid degradation; L-kynurenine degradation; L-alanine and anthranilate from L-kynurenine: step 1/1.</text>
</comment>
<comment type="pathway">
    <text evidence="1">Cofactor biosynthesis; NAD(+) biosynthesis; quinolinate from L-kynurenine: step 2/3.</text>
</comment>
<comment type="subunit">
    <text evidence="1">Homodimer.</text>
</comment>
<comment type="subcellular location">
    <subcellularLocation>
        <location evidence="1">Cytoplasm</location>
    </subcellularLocation>
</comment>
<comment type="similarity">
    <text evidence="1">Belongs to the kynureninase family.</text>
</comment>
<proteinExistence type="inferred from homology"/>
<organism>
    <name type="scientific">Candida albicans (strain SC5314 / ATCC MYA-2876)</name>
    <name type="common">Yeast</name>
    <dbReference type="NCBI Taxonomy" id="237561"/>
    <lineage>
        <taxon>Eukaryota</taxon>
        <taxon>Fungi</taxon>
        <taxon>Dikarya</taxon>
        <taxon>Ascomycota</taxon>
        <taxon>Saccharomycotina</taxon>
        <taxon>Pichiomycetes</taxon>
        <taxon>Debaryomycetaceae</taxon>
        <taxon>Candida/Lodderomyces clade</taxon>
        <taxon>Candida</taxon>
    </lineage>
</organism>
<protein>
    <recommendedName>
        <fullName evidence="1">Kynureninase</fullName>
        <ecNumber evidence="1">3.7.1.3</ecNumber>
    </recommendedName>
    <alternativeName>
        <fullName evidence="1">Biosynthesis of nicotinic acid protein 5</fullName>
    </alternativeName>
    <alternativeName>
        <fullName evidence="1">L-kynurenine hydrolase</fullName>
    </alternativeName>
</protein>